<name>ARLY_THEPX</name>
<proteinExistence type="inferred from homology"/>
<accession>B0K4D9</accession>
<dbReference type="EC" id="4.3.2.1" evidence="1"/>
<dbReference type="EMBL" id="CP000923">
    <property type="protein sequence ID" value="ABY91972.1"/>
    <property type="molecule type" value="Genomic_DNA"/>
</dbReference>
<dbReference type="RefSeq" id="WP_003868143.1">
    <property type="nucleotide sequence ID" value="NC_010320.1"/>
</dbReference>
<dbReference type="SMR" id="B0K4D9"/>
<dbReference type="KEGG" id="tex:Teth514_0664"/>
<dbReference type="HOGENOM" id="CLU_027272_2_3_9"/>
<dbReference type="UniPathway" id="UPA00068">
    <property type="reaction ID" value="UER00114"/>
</dbReference>
<dbReference type="Proteomes" id="UP000002155">
    <property type="component" value="Chromosome"/>
</dbReference>
<dbReference type="GO" id="GO:0005829">
    <property type="term" value="C:cytosol"/>
    <property type="evidence" value="ECO:0007669"/>
    <property type="project" value="TreeGrafter"/>
</dbReference>
<dbReference type="GO" id="GO:0004056">
    <property type="term" value="F:argininosuccinate lyase activity"/>
    <property type="evidence" value="ECO:0007669"/>
    <property type="project" value="UniProtKB-UniRule"/>
</dbReference>
<dbReference type="GO" id="GO:0042450">
    <property type="term" value="P:arginine biosynthetic process via ornithine"/>
    <property type="evidence" value="ECO:0007669"/>
    <property type="project" value="InterPro"/>
</dbReference>
<dbReference type="GO" id="GO:0006526">
    <property type="term" value="P:L-arginine biosynthetic process"/>
    <property type="evidence" value="ECO:0007669"/>
    <property type="project" value="UniProtKB-UniRule"/>
</dbReference>
<dbReference type="CDD" id="cd01359">
    <property type="entry name" value="Argininosuccinate_lyase"/>
    <property type="match status" value="1"/>
</dbReference>
<dbReference type="FunFam" id="1.10.275.10:FF:000002">
    <property type="entry name" value="Argininosuccinate lyase"/>
    <property type="match status" value="1"/>
</dbReference>
<dbReference type="FunFam" id="1.10.40.30:FF:000001">
    <property type="entry name" value="Argininosuccinate lyase"/>
    <property type="match status" value="1"/>
</dbReference>
<dbReference type="FunFam" id="1.20.200.10:FF:000006">
    <property type="entry name" value="Argininosuccinate lyase"/>
    <property type="match status" value="1"/>
</dbReference>
<dbReference type="Gene3D" id="1.10.40.30">
    <property type="entry name" value="Fumarase/aspartase (C-terminal domain)"/>
    <property type="match status" value="1"/>
</dbReference>
<dbReference type="Gene3D" id="1.20.200.10">
    <property type="entry name" value="Fumarase/aspartase (Central domain)"/>
    <property type="match status" value="1"/>
</dbReference>
<dbReference type="Gene3D" id="1.10.275.10">
    <property type="entry name" value="Fumarase/aspartase (N-terminal domain)"/>
    <property type="match status" value="1"/>
</dbReference>
<dbReference type="HAMAP" id="MF_00006">
    <property type="entry name" value="Arg_succ_lyase"/>
    <property type="match status" value="1"/>
</dbReference>
<dbReference type="InterPro" id="IPR029419">
    <property type="entry name" value="Arg_succ_lyase_C"/>
</dbReference>
<dbReference type="InterPro" id="IPR009049">
    <property type="entry name" value="Argininosuccinate_lyase"/>
</dbReference>
<dbReference type="InterPro" id="IPR024083">
    <property type="entry name" value="Fumarase/histidase_N"/>
</dbReference>
<dbReference type="InterPro" id="IPR020557">
    <property type="entry name" value="Fumarate_lyase_CS"/>
</dbReference>
<dbReference type="InterPro" id="IPR000362">
    <property type="entry name" value="Fumarate_lyase_fam"/>
</dbReference>
<dbReference type="InterPro" id="IPR022761">
    <property type="entry name" value="Fumarate_lyase_N"/>
</dbReference>
<dbReference type="InterPro" id="IPR008948">
    <property type="entry name" value="L-Aspartase-like"/>
</dbReference>
<dbReference type="NCBIfam" id="TIGR00838">
    <property type="entry name" value="argH"/>
    <property type="match status" value="1"/>
</dbReference>
<dbReference type="PANTHER" id="PTHR43814">
    <property type="entry name" value="ARGININOSUCCINATE LYASE"/>
    <property type="match status" value="1"/>
</dbReference>
<dbReference type="PANTHER" id="PTHR43814:SF1">
    <property type="entry name" value="ARGININOSUCCINATE LYASE"/>
    <property type="match status" value="1"/>
</dbReference>
<dbReference type="Pfam" id="PF14698">
    <property type="entry name" value="ASL_C2"/>
    <property type="match status" value="1"/>
</dbReference>
<dbReference type="Pfam" id="PF00206">
    <property type="entry name" value="Lyase_1"/>
    <property type="match status" value="1"/>
</dbReference>
<dbReference type="PRINTS" id="PR00145">
    <property type="entry name" value="ARGSUCLYASE"/>
</dbReference>
<dbReference type="PRINTS" id="PR00149">
    <property type="entry name" value="FUMRATELYASE"/>
</dbReference>
<dbReference type="SUPFAM" id="SSF48557">
    <property type="entry name" value="L-aspartase-like"/>
    <property type="match status" value="1"/>
</dbReference>
<dbReference type="PROSITE" id="PS00163">
    <property type="entry name" value="FUMARATE_LYASES"/>
    <property type="match status" value="1"/>
</dbReference>
<evidence type="ECO:0000255" key="1">
    <source>
        <dbReference type="HAMAP-Rule" id="MF_00006"/>
    </source>
</evidence>
<feature type="chain" id="PRO_1000089126" description="Argininosuccinate lyase">
    <location>
        <begin position="1"/>
        <end position="441"/>
    </location>
</feature>
<gene>
    <name evidence="1" type="primary">argH</name>
    <name type="ordered locus">Teth514_0664</name>
</gene>
<organism>
    <name type="scientific">Thermoanaerobacter sp. (strain X514)</name>
    <dbReference type="NCBI Taxonomy" id="399726"/>
    <lineage>
        <taxon>Bacteria</taxon>
        <taxon>Bacillati</taxon>
        <taxon>Bacillota</taxon>
        <taxon>Clostridia</taxon>
        <taxon>Thermoanaerobacterales</taxon>
        <taxon>Thermoanaerobacteraceae</taxon>
        <taxon>Thermoanaerobacter</taxon>
    </lineage>
</organism>
<sequence length="441" mass="50191">MKLWGGRFKSETDKLMEEFNSSISFDIRLLKHDILGSIAHAKGLYKAGVLTEDELNLIEKGLKEILDETNVGEIPNDEDVHSYVERLLTEKIGDVGRKLHTGRSRNDQVATDERLYLRDEIDKIKEDLIKLIDTLKEMAETYKKAIMPGYTHLQRAQPVTFGHHLLAYVEMFKRDLSRLEDMYKRVNVMPLGSGALAGTTFDIDRKYVASLLGFDDITLNSMDGVSDRDFVIEFLSFASITMMHLSRFCEELILWSTKEFDFIEMDDRFSTGSSMMPQKKNPDAAELIRGKTGRVYGDLITILTVMKGLSLAYNKDMQEDKEALFDGIDTLKMSLKVFTEMIKTIKVKTDNMEKAAKYGYMNATDFADYLVSKGIPFRTAHEIAGKVVLYAIERNLAIEDLPLNELKKFSDVIDEDVYEAIDLKNTLKKKKTIGAPTSIQS</sequence>
<keyword id="KW-0028">Amino-acid biosynthesis</keyword>
<keyword id="KW-0055">Arginine biosynthesis</keyword>
<keyword id="KW-0963">Cytoplasm</keyword>
<keyword id="KW-0456">Lyase</keyword>
<reference key="1">
    <citation type="submission" date="2008-01" db="EMBL/GenBank/DDBJ databases">
        <title>Complete sequence of Thermoanaerobacter sp. X514.</title>
        <authorList>
            <consortium name="US DOE Joint Genome Institute"/>
            <person name="Copeland A."/>
            <person name="Lucas S."/>
            <person name="Lapidus A."/>
            <person name="Barry K."/>
            <person name="Glavina del Rio T."/>
            <person name="Dalin E."/>
            <person name="Tice H."/>
            <person name="Pitluck S."/>
            <person name="Bruce D."/>
            <person name="Goodwin L."/>
            <person name="Saunders E."/>
            <person name="Brettin T."/>
            <person name="Detter J.C."/>
            <person name="Han C."/>
            <person name="Schmutz J."/>
            <person name="Larimer F."/>
            <person name="Land M."/>
            <person name="Hauser L."/>
            <person name="Kyrpides N."/>
            <person name="Kim E."/>
            <person name="Hemme C."/>
            <person name="Fields M.W."/>
            <person name="He Z."/>
            <person name="Zhou J."/>
            <person name="Richardson P."/>
        </authorList>
    </citation>
    <scope>NUCLEOTIDE SEQUENCE [LARGE SCALE GENOMIC DNA]</scope>
    <source>
        <strain>X514</strain>
    </source>
</reference>
<comment type="catalytic activity">
    <reaction evidence="1">
        <text>2-(N(omega)-L-arginino)succinate = fumarate + L-arginine</text>
        <dbReference type="Rhea" id="RHEA:24020"/>
        <dbReference type="ChEBI" id="CHEBI:29806"/>
        <dbReference type="ChEBI" id="CHEBI:32682"/>
        <dbReference type="ChEBI" id="CHEBI:57472"/>
        <dbReference type="EC" id="4.3.2.1"/>
    </reaction>
</comment>
<comment type="pathway">
    <text evidence="1">Amino-acid biosynthesis; L-arginine biosynthesis; L-arginine from L-ornithine and carbamoyl phosphate: step 3/3.</text>
</comment>
<comment type="subcellular location">
    <subcellularLocation>
        <location evidence="1">Cytoplasm</location>
    </subcellularLocation>
</comment>
<comment type="similarity">
    <text evidence="1">Belongs to the lyase 1 family. Argininosuccinate lyase subfamily.</text>
</comment>
<protein>
    <recommendedName>
        <fullName evidence="1">Argininosuccinate lyase</fullName>
        <shortName evidence="1">ASAL</shortName>
        <ecNumber evidence="1">4.3.2.1</ecNumber>
    </recommendedName>
    <alternativeName>
        <fullName evidence="1">Arginosuccinase</fullName>
    </alternativeName>
</protein>